<evidence type="ECO:0000255" key="1">
    <source>
        <dbReference type="HAMAP-Rule" id="MF_00379"/>
    </source>
</evidence>
<gene>
    <name evidence="1" type="primary">mnmE</name>
    <name evidence="1" type="synonym">trmE</name>
    <name type="ordered locus">Dshi_3454</name>
</gene>
<dbReference type="EC" id="3.6.-.-" evidence="1"/>
<dbReference type="EMBL" id="CP000830">
    <property type="protein sequence ID" value="ABV95187.1"/>
    <property type="molecule type" value="Genomic_DNA"/>
</dbReference>
<dbReference type="RefSeq" id="WP_012180111.1">
    <property type="nucleotide sequence ID" value="NC_009952.1"/>
</dbReference>
<dbReference type="SMR" id="A8LPC2"/>
<dbReference type="STRING" id="398580.Dshi_3454"/>
<dbReference type="KEGG" id="dsh:Dshi_3454"/>
<dbReference type="eggNOG" id="COG0486">
    <property type="taxonomic scope" value="Bacteria"/>
</dbReference>
<dbReference type="HOGENOM" id="CLU_019624_3_1_5"/>
<dbReference type="OrthoDB" id="9805918at2"/>
<dbReference type="Proteomes" id="UP000006833">
    <property type="component" value="Chromosome"/>
</dbReference>
<dbReference type="GO" id="GO:0005737">
    <property type="term" value="C:cytoplasm"/>
    <property type="evidence" value="ECO:0007669"/>
    <property type="project" value="UniProtKB-SubCell"/>
</dbReference>
<dbReference type="GO" id="GO:0005525">
    <property type="term" value="F:GTP binding"/>
    <property type="evidence" value="ECO:0007669"/>
    <property type="project" value="UniProtKB-UniRule"/>
</dbReference>
<dbReference type="GO" id="GO:0003924">
    <property type="term" value="F:GTPase activity"/>
    <property type="evidence" value="ECO:0007669"/>
    <property type="project" value="UniProtKB-UniRule"/>
</dbReference>
<dbReference type="GO" id="GO:0046872">
    <property type="term" value="F:metal ion binding"/>
    <property type="evidence" value="ECO:0007669"/>
    <property type="project" value="UniProtKB-KW"/>
</dbReference>
<dbReference type="GO" id="GO:0030488">
    <property type="term" value="P:tRNA methylation"/>
    <property type="evidence" value="ECO:0007669"/>
    <property type="project" value="TreeGrafter"/>
</dbReference>
<dbReference type="GO" id="GO:0002098">
    <property type="term" value="P:tRNA wobble uridine modification"/>
    <property type="evidence" value="ECO:0007669"/>
    <property type="project" value="TreeGrafter"/>
</dbReference>
<dbReference type="CDD" id="cd04164">
    <property type="entry name" value="trmE"/>
    <property type="match status" value="1"/>
</dbReference>
<dbReference type="CDD" id="cd14858">
    <property type="entry name" value="TrmE_N"/>
    <property type="match status" value="1"/>
</dbReference>
<dbReference type="FunFam" id="3.30.1360.120:FF:000007">
    <property type="entry name" value="tRNA modification GTPase GTPBP3, mitochondrial"/>
    <property type="match status" value="1"/>
</dbReference>
<dbReference type="Gene3D" id="3.40.50.300">
    <property type="entry name" value="P-loop containing nucleotide triphosphate hydrolases"/>
    <property type="match status" value="1"/>
</dbReference>
<dbReference type="Gene3D" id="3.30.1360.120">
    <property type="entry name" value="Probable tRNA modification gtpase trme, domain 1"/>
    <property type="match status" value="1"/>
</dbReference>
<dbReference type="Gene3D" id="1.20.120.430">
    <property type="entry name" value="tRNA modification GTPase MnmE domain 2"/>
    <property type="match status" value="1"/>
</dbReference>
<dbReference type="HAMAP" id="MF_00379">
    <property type="entry name" value="GTPase_MnmE"/>
    <property type="match status" value="1"/>
</dbReference>
<dbReference type="InterPro" id="IPR031168">
    <property type="entry name" value="G_TrmE"/>
</dbReference>
<dbReference type="InterPro" id="IPR006073">
    <property type="entry name" value="GTP-bd"/>
</dbReference>
<dbReference type="InterPro" id="IPR018948">
    <property type="entry name" value="GTP-bd_TrmE_N"/>
</dbReference>
<dbReference type="InterPro" id="IPR004520">
    <property type="entry name" value="GTPase_MnmE"/>
</dbReference>
<dbReference type="InterPro" id="IPR027368">
    <property type="entry name" value="MnmE_dom2"/>
</dbReference>
<dbReference type="InterPro" id="IPR025867">
    <property type="entry name" value="MnmE_helical"/>
</dbReference>
<dbReference type="InterPro" id="IPR027417">
    <property type="entry name" value="P-loop_NTPase"/>
</dbReference>
<dbReference type="InterPro" id="IPR005225">
    <property type="entry name" value="Small_GTP-bd"/>
</dbReference>
<dbReference type="InterPro" id="IPR027266">
    <property type="entry name" value="TrmE/GcvT_dom1"/>
</dbReference>
<dbReference type="NCBIfam" id="TIGR00450">
    <property type="entry name" value="mnmE_trmE_thdF"/>
    <property type="match status" value="1"/>
</dbReference>
<dbReference type="NCBIfam" id="NF003661">
    <property type="entry name" value="PRK05291.1-3"/>
    <property type="match status" value="1"/>
</dbReference>
<dbReference type="NCBIfam" id="TIGR00231">
    <property type="entry name" value="small_GTP"/>
    <property type="match status" value="1"/>
</dbReference>
<dbReference type="PANTHER" id="PTHR42714">
    <property type="entry name" value="TRNA MODIFICATION GTPASE GTPBP3"/>
    <property type="match status" value="1"/>
</dbReference>
<dbReference type="PANTHER" id="PTHR42714:SF2">
    <property type="entry name" value="TRNA MODIFICATION GTPASE GTPBP3, MITOCHONDRIAL"/>
    <property type="match status" value="1"/>
</dbReference>
<dbReference type="Pfam" id="PF01926">
    <property type="entry name" value="MMR_HSR1"/>
    <property type="match status" value="1"/>
</dbReference>
<dbReference type="Pfam" id="PF12631">
    <property type="entry name" value="MnmE_helical"/>
    <property type="match status" value="1"/>
</dbReference>
<dbReference type="Pfam" id="PF10396">
    <property type="entry name" value="TrmE_N"/>
    <property type="match status" value="1"/>
</dbReference>
<dbReference type="SUPFAM" id="SSF52540">
    <property type="entry name" value="P-loop containing nucleoside triphosphate hydrolases"/>
    <property type="match status" value="1"/>
</dbReference>
<dbReference type="SUPFAM" id="SSF116878">
    <property type="entry name" value="TrmE connector domain"/>
    <property type="match status" value="1"/>
</dbReference>
<dbReference type="PROSITE" id="PS51709">
    <property type="entry name" value="G_TRME"/>
    <property type="match status" value="1"/>
</dbReference>
<comment type="function">
    <text evidence="1">Exhibits a very high intrinsic GTPase hydrolysis rate. Involved in the addition of a carboxymethylaminomethyl (cmnm) group at the wobble position (U34) of certain tRNAs, forming tRNA-cmnm(5)s(2)U34.</text>
</comment>
<comment type="cofactor">
    <cofactor evidence="1">
        <name>K(+)</name>
        <dbReference type="ChEBI" id="CHEBI:29103"/>
    </cofactor>
    <text evidence="1">Binds 1 potassium ion per subunit.</text>
</comment>
<comment type="subunit">
    <text evidence="1">Homodimer. Heterotetramer of two MnmE and two MnmG subunits.</text>
</comment>
<comment type="subcellular location">
    <subcellularLocation>
        <location evidence="1">Cytoplasm</location>
    </subcellularLocation>
</comment>
<comment type="similarity">
    <text evidence="1">Belongs to the TRAFAC class TrmE-Era-EngA-EngB-Septin-like GTPase superfamily. TrmE GTPase family.</text>
</comment>
<protein>
    <recommendedName>
        <fullName evidence="1">tRNA modification GTPase MnmE</fullName>
        <ecNumber evidence="1">3.6.-.-</ecNumber>
    </recommendedName>
</protein>
<name>MNME_DINSH</name>
<keyword id="KW-0963">Cytoplasm</keyword>
<keyword id="KW-0342">GTP-binding</keyword>
<keyword id="KW-0378">Hydrolase</keyword>
<keyword id="KW-0460">Magnesium</keyword>
<keyword id="KW-0479">Metal-binding</keyword>
<keyword id="KW-0547">Nucleotide-binding</keyword>
<keyword id="KW-0630">Potassium</keyword>
<keyword id="KW-1185">Reference proteome</keyword>
<keyword id="KW-0819">tRNA processing</keyword>
<organism>
    <name type="scientific">Dinoroseobacter shibae (strain DSM 16493 / NCIMB 14021 / DFL 12)</name>
    <dbReference type="NCBI Taxonomy" id="398580"/>
    <lineage>
        <taxon>Bacteria</taxon>
        <taxon>Pseudomonadati</taxon>
        <taxon>Pseudomonadota</taxon>
        <taxon>Alphaproteobacteria</taxon>
        <taxon>Rhodobacterales</taxon>
        <taxon>Roseobacteraceae</taxon>
        <taxon>Dinoroseobacter</taxon>
    </lineage>
</organism>
<accession>A8LPC2</accession>
<proteinExistence type="inferred from homology"/>
<reference key="1">
    <citation type="journal article" date="2010" name="ISME J.">
        <title>The complete genome sequence of the algal symbiont Dinoroseobacter shibae: a hitchhiker's guide to life in the sea.</title>
        <authorList>
            <person name="Wagner-Dobler I."/>
            <person name="Ballhausen B."/>
            <person name="Berger M."/>
            <person name="Brinkhoff T."/>
            <person name="Buchholz I."/>
            <person name="Bunk B."/>
            <person name="Cypionka H."/>
            <person name="Daniel R."/>
            <person name="Drepper T."/>
            <person name="Gerdts G."/>
            <person name="Hahnke S."/>
            <person name="Han C."/>
            <person name="Jahn D."/>
            <person name="Kalhoefer D."/>
            <person name="Kiss H."/>
            <person name="Klenk H.P."/>
            <person name="Kyrpides N."/>
            <person name="Liebl W."/>
            <person name="Liesegang H."/>
            <person name="Meincke L."/>
            <person name="Pati A."/>
            <person name="Petersen J."/>
            <person name="Piekarski T."/>
            <person name="Pommerenke C."/>
            <person name="Pradella S."/>
            <person name="Pukall R."/>
            <person name="Rabus R."/>
            <person name="Stackebrandt E."/>
            <person name="Thole S."/>
            <person name="Thompson L."/>
            <person name="Tielen P."/>
            <person name="Tomasch J."/>
            <person name="von Jan M."/>
            <person name="Wanphrut N."/>
            <person name="Wichels A."/>
            <person name="Zech H."/>
            <person name="Simon M."/>
        </authorList>
    </citation>
    <scope>NUCLEOTIDE SEQUENCE [LARGE SCALE GENOMIC DNA]</scope>
    <source>
        <strain>DSM 16493 / NCIMB 14021 / DFL 12</strain>
    </source>
</reference>
<feature type="chain" id="PRO_0000345776" description="tRNA modification GTPase MnmE">
    <location>
        <begin position="1"/>
        <end position="429"/>
    </location>
</feature>
<feature type="domain" description="TrmE-type G">
    <location>
        <begin position="213"/>
        <end position="353"/>
    </location>
</feature>
<feature type="binding site" evidence="1">
    <location>
        <position position="20"/>
    </location>
    <ligand>
        <name>(6S)-5-formyl-5,6,7,8-tetrahydrofolate</name>
        <dbReference type="ChEBI" id="CHEBI:57457"/>
    </ligand>
</feature>
<feature type="binding site" evidence="1">
    <location>
        <position position="77"/>
    </location>
    <ligand>
        <name>(6S)-5-formyl-5,6,7,8-tetrahydrofolate</name>
        <dbReference type="ChEBI" id="CHEBI:57457"/>
    </ligand>
</feature>
<feature type="binding site" evidence="1">
    <location>
        <position position="117"/>
    </location>
    <ligand>
        <name>(6S)-5-formyl-5,6,7,8-tetrahydrofolate</name>
        <dbReference type="ChEBI" id="CHEBI:57457"/>
    </ligand>
</feature>
<feature type="binding site" evidence="1">
    <location>
        <begin position="223"/>
        <end position="228"/>
    </location>
    <ligand>
        <name>GTP</name>
        <dbReference type="ChEBI" id="CHEBI:37565"/>
    </ligand>
</feature>
<feature type="binding site" evidence="1">
    <location>
        <position position="223"/>
    </location>
    <ligand>
        <name>K(+)</name>
        <dbReference type="ChEBI" id="CHEBI:29103"/>
    </ligand>
</feature>
<feature type="binding site" evidence="1">
    <location>
        <position position="227"/>
    </location>
    <ligand>
        <name>Mg(2+)</name>
        <dbReference type="ChEBI" id="CHEBI:18420"/>
    </ligand>
</feature>
<feature type="binding site" evidence="1">
    <location>
        <begin position="242"/>
        <end position="248"/>
    </location>
    <ligand>
        <name>GTP</name>
        <dbReference type="ChEBI" id="CHEBI:37565"/>
    </ligand>
</feature>
<feature type="binding site" evidence="1">
    <location>
        <position position="242"/>
    </location>
    <ligand>
        <name>K(+)</name>
        <dbReference type="ChEBI" id="CHEBI:29103"/>
    </ligand>
</feature>
<feature type="binding site" evidence="1">
    <location>
        <position position="244"/>
    </location>
    <ligand>
        <name>K(+)</name>
        <dbReference type="ChEBI" id="CHEBI:29103"/>
    </ligand>
</feature>
<feature type="binding site" evidence="1">
    <location>
        <position position="247"/>
    </location>
    <ligand>
        <name>K(+)</name>
        <dbReference type="ChEBI" id="CHEBI:29103"/>
    </ligand>
</feature>
<feature type="binding site" evidence="1">
    <location>
        <position position="248"/>
    </location>
    <ligand>
        <name>Mg(2+)</name>
        <dbReference type="ChEBI" id="CHEBI:18420"/>
    </ligand>
</feature>
<feature type="binding site" evidence="1">
    <location>
        <begin position="267"/>
        <end position="270"/>
    </location>
    <ligand>
        <name>GTP</name>
        <dbReference type="ChEBI" id="CHEBI:37565"/>
    </ligand>
</feature>
<feature type="binding site" evidence="1">
    <location>
        <position position="429"/>
    </location>
    <ligand>
        <name>(6S)-5-formyl-5,6,7,8-tetrahydrofolate</name>
        <dbReference type="ChEBI" id="CHEBI:57457"/>
    </ligand>
</feature>
<sequence>MDTIFALASAPGKSGVAVLRISGSRAFHAGRVLAGGLPDAQRTSLRKLRDSDGSVIDEALVLAFESPNSFTGEDCVEFQTHGSPAIIAALMNELSALPGLRLAQPGEFTRRALENNRMDLAQVEGLADLIEAETEAQRKQALRTFSGELGQKVELWRKDLVRAMALLEVTIDFADEEVPEDVYPEVQELLGRVSQNLAAESAGTHAAERIRHGFEVAILGAPNVGKSSLLNRLAGREAAITSSIAGTTRDVVEVRLDLDGLPVTVLDTAGLRETQDEIEQIGISRAMARAESADLRIILIEDGRLPSGLGVADDDILVQAKSDILPSSSEFAISSVTGRGIDRLVKAVSHRLSLRAASAGTATHVRHRLAISSAVESLDLAKTKISEGFPVELVIEDLRQALVDLESLIGRVGVEQVLDEIFANFCLGK</sequence>